<reference key="1">
    <citation type="journal article" date="2004" name="Nature">
        <title>Genome evolution in yeasts.</title>
        <authorList>
            <person name="Dujon B."/>
            <person name="Sherman D."/>
            <person name="Fischer G."/>
            <person name="Durrens P."/>
            <person name="Casaregola S."/>
            <person name="Lafontaine I."/>
            <person name="de Montigny J."/>
            <person name="Marck C."/>
            <person name="Neuveglise C."/>
            <person name="Talla E."/>
            <person name="Goffard N."/>
            <person name="Frangeul L."/>
            <person name="Aigle M."/>
            <person name="Anthouard V."/>
            <person name="Babour A."/>
            <person name="Barbe V."/>
            <person name="Barnay S."/>
            <person name="Blanchin S."/>
            <person name="Beckerich J.-M."/>
            <person name="Beyne E."/>
            <person name="Bleykasten C."/>
            <person name="Boisrame A."/>
            <person name="Boyer J."/>
            <person name="Cattolico L."/>
            <person name="Confanioleri F."/>
            <person name="de Daruvar A."/>
            <person name="Despons L."/>
            <person name="Fabre E."/>
            <person name="Fairhead C."/>
            <person name="Ferry-Dumazet H."/>
            <person name="Groppi A."/>
            <person name="Hantraye F."/>
            <person name="Hennequin C."/>
            <person name="Jauniaux N."/>
            <person name="Joyet P."/>
            <person name="Kachouri R."/>
            <person name="Kerrest A."/>
            <person name="Koszul R."/>
            <person name="Lemaire M."/>
            <person name="Lesur I."/>
            <person name="Ma L."/>
            <person name="Muller H."/>
            <person name="Nicaud J.-M."/>
            <person name="Nikolski M."/>
            <person name="Oztas S."/>
            <person name="Ozier-Kalogeropoulos O."/>
            <person name="Pellenz S."/>
            <person name="Potier S."/>
            <person name="Richard G.-F."/>
            <person name="Straub M.-L."/>
            <person name="Suleau A."/>
            <person name="Swennen D."/>
            <person name="Tekaia F."/>
            <person name="Wesolowski-Louvel M."/>
            <person name="Westhof E."/>
            <person name="Wirth B."/>
            <person name="Zeniou-Meyer M."/>
            <person name="Zivanovic Y."/>
            <person name="Bolotin-Fukuhara M."/>
            <person name="Thierry A."/>
            <person name="Bouchier C."/>
            <person name="Caudron B."/>
            <person name="Scarpelli C."/>
            <person name="Gaillardin C."/>
            <person name="Weissenbach J."/>
            <person name="Wincker P."/>
            <person name="Souciet J.-L."/>
        </authorList>
    </citation>
    <scope>NUCLEOTIDE SEQUENCE [LARGE SCALE GENOMIC DNA]</scope>
    <source>
        <strain>ATCC 2001 / BCRC 20586 / JCM 3761 / NBRC 0622 / NRRL Y-65 / CBS 138</strain>
    </source>
</reference>
<protein>
    <recommendedName>
        <fullName>Mediator of RNA polymerase II transcription subunit 4</fullName>
    </recommendedName>
    <alternativeName>
        <fullName>Mediator complex subunit 4</fullName>
    </alternativeName>
</protein>
<name>MED4_CANGA</name>
<organism>
    <name type="scientific">Candida glabrata (strain ATCC 2001 / BCRC 20586 / JCM 3761 / NBRC 0622 / NRRL Y-65 / CBS 138)</name>
    <name type="common">Yeast</name>
    <name type="synonym">Nakaseomyces glabratus</name>
    <dbReference type="NCBI Taxonomy" id="284593"/>
    <lineage>
        <taxon>Eukaryota</taxon>
        <taxon>Fungi</taxon>
        <taxon>Dikarya</taxon>
        <taxon>Ascomycota</taxon>
        <taxon>Saccharomycotina</taxon>
        <taxon>Saccharomycetes</taxon>
        <taxon>Saccharomycetales</taxon>
        <taxon>Saccharomycetaceae</taxon>
        <taxon>Nakaseomyces</taxon>
    </lineage>
</organism>
<comment type="function">
    <text evidence="1">Component of the Mediator complex, a coactivator involved in the regulated transcription of nearly all RNA polymerase II-dependent genes. Mediator functions as a bridge to convey information from gene-specific regulatory proteins to the basal RNA polymerase II transcription machinery. Mediator is recruited to promoters by direct interactions with regulatory proteins and serves as a scaffold for the assembly of a functional preinitiation complex with RNA polymerase II and the general transcription factors (By similarity).</text>
</comment>
<comment type="subunit">
    <text evidence="1">Component of the Mediator complex.</text>
</comment>
<comment type="subcellular location">
    <subcellularLocation>
        <location evidence="1">Nucleus</location>
    </subcellularLocation>
</comment>
<comment type="similarity">
    <text evidence="3">Belongs to the Mediator complex subunit 4 family.</text>
</comment>
<dbReference type="EMBL" id="CR380958">
    <property type="protein sequence ID" value="CAG61946.1"/>
    <property type="molecule type" value="Genomic_DNA"/>
</dbReference>
<dbReference type="RefSeq" id="XP_448976.1">
    <property type="nucleotide sequence ID" value="XM_448976.1"/>
</dbReference>
<dbReference type="SMR" id="Q6FLB8"/>
<dbReference type="FunCoup" id="Q6FLB8">
    <property type="interactions" value="305"/>
</dbReference>
<dbReference type="STRING" id="284593.Q6FLB8"/>
<dbReference type="EnsemblFungi" id="CAGL0L04620g-T">
    <property type="protein sequence ID" value="CAGL0L04620g-T-p1"/>
    <property type="gene ID" value="CAGL0L04620g"/>
</dbReference>
<dbReference type="KEGG" id="cgr:2890646"/>
<dbReference type="CGD" id="CAL0135512">
    <property type="gene designation" value="CAGL0L04620g"/>
</dbReference>
<dbReference type="VEuPathDB" id="FungiDB:B1J91_L04620g"/>
<dbReference type="VEuPathDB" id="FungiDB:CAGL0L04620g"/>
<dbReference type="eggNOG" id="ENOG502RXM0">
    <property type="taxonomic scope" value="Eukaryota"/>
</dbReference>
<dbReference type="HOGENOM" id="CLU_071875_0_0_1"/>
<dbReference type="InParanoid" id="Q6FLB8"/>
<dbReference type="OMA" id="PFQIHPN"/>
<dbReference type="Proteomes" id="UP000002428">
    <property type="component" value="Chromosome L"/>
</dbReference>
<dbReference type="GO" id="GO:0070847">
    <property type="term" value="C:core mediator complex"/>
    <property type="evidence" value="ECO:0007669"/>
    <property type="project" value="EnsemblFungi"/>
</dbReference>
<dbReference type="GO" id="GO:0016592">
    <property type="term" value="C:mediator complex"/>
    <property type="evidence" value="ECO:0007669"/>
    <property type="project" value="InterPro"/>
</dbReference>
<dbReference type="GO" id="GO:0000979">
    <property type="term" value="F:RNA polymerase II core promoter sequence-specific DNA binding"/>
    <property type="evidence" value="ECO:0007669"/>
    <property type="project" value="EnsemblFungi"/>
</dbReference>
<dbReference type="GO" id="GO:0003712">
    <property type="term" value="F:transcription coregulator activity"/>
    <property type="evidence" value="ECO:0007669"/>
    <property type="project" value="InterPro"/>
</dbReference>
<dbReference type="GO" id="GO:0034605">
    <property type="term" value="P:cellular response to heat"/>
    <property type="evidence" value="ECO:0007669"/>
    <property type="project" value="EnsemblFungi"/>
</dbReference>
<dbReference type="GO" id="GO:0032968">
    <property type="term" value="P:positive regulation of transcription elongation by RNA polymerase II"/>
    <property type="evidence" value="ECO:0007669"/>
    <property type="project" value="EnsemblFungi"/>
</dbReference>
<dbReference type="GO" id="GO:0060261">
    <property type="term" value="P:positive regulation of transcription initiation by RNA polymerase II"/>
    <property type="evidence" value="ECO:0007669"/>
    <property type="project" value="EnsemblFungi"/>
</dbReference>
<dbReference type="GO" id="GO:0051123">
    <property type="term" value="P:RNA polymerase II preinitiation complex assembly"/>
    <property type="evidence" value="ECO:0007669"/>
    <property type="project" value="EnsemblFungi"/>
</dbReference>
<dbReference type="InterPro" id="IPR019258">
    <property type="entry name" value="Mediator_Med4"/>
</dbReference>
<dbReference type="PANTHER" id="PTHR13208">
    <property type="entry name" value="MEDIATOR OF RNA POLYMERASE II TRANSCRIPTION SUBUNIT 4"/>
    <property type="match status" value="1"/>
</dbReference>
<dbReference type="PANTHER" id="PTHR13208:SF2">
    <property type="entry name" value="MEDIATOR OF RNA POLYMERASE II TRANSCRIPTION SUBUNIT 4"/>
    <property type="match status" value="1"/>
</dbReference>
<dbReference type="Pfam" id="PF10018">
    <property type="entry name" value="Med4"/>
    <property type="match status" value="1"/>
</dbReference>
<proteinExistence type="inferred from homology"/>
<evidence type="ECO:0000250" key="1"/>
<evidence type="ECO:0000256" key="2">
    <source>
        <dbReference type="SAM" id="MobiDB-lite"/>
    </source>
</evidence>
<evidence type="ECO:0000305" key="3"/>
<sequence>MSLVAESNSGTISEQELDKVQLYSDLCLYEEALTKLVDSVDNFKPQLEIGKQLIEADKKLYSTLDLLPQYDSVFTRLRTLDDEISKVDQQTKNILSILNECHDDLNALPLLEEVEFEKKMILKQREKIKSNVLLEYATKLAKFTKIPPTFDKGTIGPNNFIWPAEDALRKGMLAMASLHGKELTKLPGQEDGEEDGSTANEDKNIVKDAEGAEGEIRQDDKKEDDSFVFGANANDAEGDEDKNAGEDEDEAMDSDLDLFNPDEF</sequence>
<accession>Q6FLB8</accession>
<keyword id="KW-0010">Activator</keyword>
<keyword id="KW-0539">Nucleus</keyword>
<keyword id="KW-1185">Reference proteome</keyword>
<keyword id="KW-0804">Transcription</keyword>
<keyword id="KW-0805">Transcription regulation</keyword>
<gene>
    <name type="primary">MED4</name>
    <name type="ordered locus">CAGL0L04620g</name>
</gene>
<feature type="chain" id="PRO_0000302074" description="Mediator of RNA polymerase II transcription subunit 4">
    <location>
        <begin position="1"/>
        <end position="264"/>
    </location>
</feature>
<feature type="region of interest" description="Disordered" evidence="2">
    <location>
        <begin position="183"/>
        <end position="264"/>
    </location>
</feature>
<feature type="compositionally biased region" description="Basic and acidic residues" evidence="2">
    <location>
        <begin position="200"/>
        <end position="225"/>
    </location>
</feature>
<feature type="compositionally biased region" description="Acidic residues" evidence="2">
    <location>
        <begin position="236"/>
        <end position="264"/>
    </location>
</feature>